<keyword id="KW-0156">Chromatin regulator</keyword>
<keyword id="KW-0223">Dioxygenase</keyword>
<keyword id="KW-0408">Iron</keyword>
<keyword id="KW-0479">Metal-binding</keyword>
<keyword id="KW-0539">Nucleus</keyword>
<keyword id="KW-0560">Oxidoreductase</keyword>
<keyword id="KW-0597">Phosphoprotein</keyword>
<keyword id="KW-0678">Repressor</keyword>
<keyword id="KW-0804">Transcription</keyword>
<keyword id="KW-0805">Transcription regulation</keyword>
<feature type="chain" id="PRO_0000390994" description="Bifunctional lysine-specific demethylase and histidyl-hydroxylase NO66">
    <location>
        <begin position="1"/>
        <end position="683"/>
    </location>
</feature>
<feature type="domain" description="JmjC" evidence="2">
    <location>
        <begin position="341"/>
        <end position="480"/>
    </location>
</feature>
<feature type="region of interest" description="Disordered" evidence="3">
    <location>
        <begin position="1"/>
        <end position="162"/>
    </location>
</feature>
<feature type="region of interest" description="Disordered" evidence="3">
    <location>
        <begin position="179"/>
        <end position="208"/>
    </location>
</feature>
<feature type="compositionally biased region" description="Polar residues" evidence="3">
    <location>
        <begin position="1"/>
        <end position="26"/>
    </location>
</feature>
<feature type="compositionally biased region" description="Basic and acidic residues" evidence="3">
    <location>
        <begin position="54"/>
        <end position="65"/>
    </location>
</feature>
<feature type="compositionally biased region" description="Polar residues" evidence="3">
    <location>
        <begin position="85"/>
        <end position="94"/>
    </location>
</feature>
<feature type="compositionally biased region" description="Basic residues" evidence="3">
    <location>
        <begin position="95"/>
        <end position="108"/>
    </location>
</feature>
<feature type="compositionally biased region" description="Low complexity" evidence="3">
    <location>
        <begin position="116"/>
        <end position="125"/>
    </location>
</feature>
<feature type="compositionally biased region" description="Low complexity" evidence="3">
    <location>
        <begin position="179"/>
        <end position="189"/>
    </location>
</feature>
<feature type="binding site" evidence="2">
    <location>
        <position position="381"/>
    </location>
    <ligand>
        <name>Fe cation</name>
        <dbReference type="ChEBI" id="CHEBI:24875"/>
        <note>catalytic</note>
    </ligand>
</feature>
<feature type="binding site" evidence="2">
    <location>
        <position position="383"/>
    </location>
    <ligand>
        <name>Fe cation</name>
        <dbReference type="ChEBI" id="CHEBI:24875"/>
        <note>catalytic</note>
    </ligand>
</feature>
<feature type="binding site" evidence="2">
    <location>
        <position position="446"/>
    </location>
    <ligand>
        <name>Fe cation</name>
        <dbReference type="ChEBI" id="CHEBI:24875"/>
        <note>catalytic</note>
    </ligand>
</feature>
<feature type="modified residue" description="Phosphoserine" evidence="1">
    <location>
        <position position="152"/>
    </location>
</feature>
<feature type="modified residue" description="Phosphothreonine" evidence="1">
    <location>
        <position position="158"/>
    </location>
</feature>
<feature type="modified residue" description="Phosphoserine" evidence="1">
    <location>
        <position position="159"/>
    </location>
</feature>
<comment type="function">
    <text evidence="1">Oxygenase that can act as both a histone lysine demethylase and a ribosomal histidine hydroxylase. Specifically demethylates 'Lys-4' (H3K4me) and 'Lys-36' (H3K36me) of histone H3, thereby playing a central role in histone code (By similarity).</text>
</comment>
<comment type="catalytic activity">
    <reaction>
        <text>N(6),N(6)-dimethyl-L-lysyl(36)-[histone H3] + 2 2-oxoglutarate + 2 O2 = L-lysyl(36)-[histone H3] + 2 formaldehyde + 2 succinate + 2 CO2</text>
        <dbReference type="Rhea" id="RHEA:42032"/>
        <dbReference type="Rhea" id="RHEA-COMP:9785"/>
        <dbReference type="Rhea" id="RHEA-COMP:9787"/>
        <dbReference type="ChEBI" id="CHEBI:15379"/>
        <dbReference type="ChEBI" id="CHEBI:16526"/>
        <dbReference type="ChEBI" id="CHEBI:16810"/>
        <dbReference type="ChEBI" id="CHEBI:16842"/>
        <dbReference type="ChEBI" id="CHEBI:29969"/>
        <dbReference type="ChEBI" id="CHEBI:30031"/>
        <dbReference type="ChEBI" id="CHEBI:61976"/>
        <dbReference type="EC" id="1.14.11.27"/>
    </reaction>
</comment>
<comment type="cofactor">
    <cofactor evidence="1">
        <name>Fe(2+)</name>
        <dbReference type="ChEBI" id="CHEBI:29033"/>
    </cofactor>
    <text evidence="1">Binds 1 Fe(2+) ion per subunit.</text>
</comment>
<comment type="subcellular location">
    <subcellularLocation>
        <location evidence="1">Nucleus</location>
    </subcellularLocation>
</comment>
<comment type="similarity">
    <text evidence="4">Belongs to the ROX family. NO66 subfamily.</text>
</comment>
<protein>
    <recommendedName>
        <fullName>Bifunctional lysine-specific demethylase and histidyl-hydroxylase NO66</fullName>
        <ecNumber>1.14.11.-</ecNumber>
        <ecNumber>1.14.11.27</ecNumber>
    </recommendedName>
    <alternativeName>
        <fullName>Histone lysine demethylase NO66</fullName>
    </alternativeName>
</protein>
<reference key="1">
    <citation type="journal article" date="2007" name="Nature">
        <title>Evolution of genes and genomes on the Drosophila phylogeny.</title>
        <authorList>
            <consortium name="Drosophila 12 genomes consortium"/>
        </authorList>
    </citation>
    <scope>NUCLEOTIDE SEQUENCE [LARGE SCALE GENOMIC DNA]</scope>
    <source>
        <strain>Tai18E2 / Tucson 14021-0261.01</strain>
    </source>
</reference>
<evidence type="ECO:0000250" key="1"/>
<evidence type="ECO:0000255" key="2">
    <source>
        <dbReference type="PROSITE-ProRule" id="PRU00538"/>
    </source>
</evidence>
<evidence type="ECO:0000256" key="3">
    <source>
        <dbReference type="SAM" id="MobiDB-lite"/>
    </source>
</evidence>
<evidence type="ECO:0000305" key="4"/>
<dbReference type="EC" id="1.14.11.-"/>
<dbReference type="EC" id="1.14.11.27"/>
<dbReference type="EMBL" id="CM000162">
    <property type="protein sequence ID" value="EDX01220.1"/>
    <property type="molecule type" value="Genomic_DNA"/>
</dbReference>
<dbReference type="SMR" id="B4Q068"/>
<dbReference type="EnsemblMetazoa" id="FBtr0262858">
    <property type="protein sequence ID" value="FBpp0261350"/>
    <property type="gene ID" value="FBgn0233870"/>
</dbReference>
<dbReference type="EnsemblMetazoa" id="XM_002100076.4">
    <property type="protein sequence ID" value="XP_002100112.1"/>
    <property type="gene ID" value="LOC6524249"/>
</dbReference>
<dbReference type="GeneID" id="6524249"/>
<dbReference type="KEGG" id="dya:Dyak_GE16340"/>
<dbReference type="CTD" id="31374"/>
<dbReference type="eggNOG" id="KOG3706">
    <property type="taxonomic scope" value="Eukaryota"/>
</dbReference>
<dbReference type="HOGENOM" id="CLU_013645_2_1_1"/>
<dbReference type="OMA" id="YLEYMGV"/>
<dbReference type="OrthoDB" id="425950at2759"/>
<dbReference type="PhylomeDB" id="B4Q068"/>
<dbReference type="Proteomes" id="UP000002282">
    <property type="component" value="Chromosome X"/>
</dbReference>
<dbReference type="GO" id="GO:0005730">
    <property type="term" value="C:nucleolus"/>
    <property type="evidence" value="ECO:0007669"/>
    <property type="project" value="EnsemblMetazoa"/>
</dbReference>
<dbReference type="GO" id="GO:0005634">
    <property type="term" value="C:nucleus"/>
    <property type="evidence" value="ECO:0000250"/>
    <property type="project" value="UniProtKB"/>
</dbReference>
<dbReference type="GO" id="GO:0016706">
    <property type="term" value="F:2-oxoglutarate-dependent dioxygenase activity"/>
    <property type="evidence" value="ECO:0000250"/>
    <property type="project" value="UniProtKB"/>
</dbReference>
<dbReference type="GO" id="GO:0051864">
    <property type="term" value="F:histone H3K36 demethylase activity"/>
    <property type="evidence" value="ECO:0000250"/>
    <property type="project" value="UniProtKB"/>
</dbReference>
<dbReference type="GO" id="GO:0140680">
    <property type="term" value="F:histone H3K36me/H3K36me2 demethylase activity"/>
    <property type="evidence" value="ECO:0007669"/>
    <property type="project" value="UniProtKB-EC"/>
</dbReference>
<dbReference type="GO" id="GO:0034647">
    <property type="term" value="F:histone H3K4me/H3K4me2/H3K4me3 demethylase activity"/>
    <property type="evidence" value="ECO:0000250"/>
    <property type="project" value="UniProtKB"/>
</dbReference>
<dbReference type="GO" id="GO:0005506">
    <property type="term" value="F:iron ion binding"/>
    <property type="evidence" value="ECO:0000250"/>
    <property type="project" value="UniProtKB"/>
</dbReference>
<dbReference type="GO" id="GO:0048149">
    <property type="term" value="P:behavioral response to ethanol"/>
    <property type="evidence" value="ECO:0007669"/>
    <property type="project" value="EnsemblMetazoa"/>
</dbReference>
<dbReference type="GO" id="GO:0048512">
    <property type="term" value="P:circadian behavior"/>
    <property type="evidence" value="ECO:0007669"/>
    <property type="project" value="EnsemblMetazoa"/>
</dbReference>
<dbReference type="GO" id="GO:0045892">
    <property type="term" value="P:negative regulation of DNA-templated transcription"/>
    <property type="evidence" value="ECO:0000250"/>
    <property type="project" value="UniProtKB"/>
</dbReference>
<dbReference type="FunFam" id="2.60.120.650:FF:000013">
    <property type="entry name" value="Ribosomal oxygenase 1"/>
    <property type="match status" value="1"/>
</dbReference>
<dbReference type="FunFam" id="1.10.10.1500:FF:000001">
    <property type="entry name" value="ribosomal oxygenase 1 isoform X1"/>
    <property type="match status" value="1"/>
</dbReference>
<dbReference type="FunFam" id="3.90.930.40:FF:000001">
    <property type="entry name" value="ribosomal oxygenase 1 isoform X1"/>
    <property type="match status" value="1"/>
</dbReference>
<dbReference type="Gene3D" id="3.90.930.40">
    <property type="match status" value="1"/>
</dbReference>
<dbReference type="Gene3D" id="2.60.120.650">
    <property type="entry name" value="Cupin"/>
    <property type="match status" value="1"/>
</dbReference>
<dbReference type="Gene3D" id="1.10.10.1500">
    <property type="entry name" value="JmjC domain-containing ribosomal oxygenase (ROX), dimer domain"/>
    <property type="match status" value="1"/>
</dbReference>
<dbReference type="InterPro" id="IPR003347">
    <property type="entry name" value="JmjC_dom"/>
</dbReference>
<dbReference type="InterPro" id="IPR039994">
    <property type="entry name" value="NO66-like"/>
</dbReference>
<dbReference type="InterPro" id="IPR049043">
    <property type="entry name" value="RIOX1/NO66-like_C_WH"/>
</dbReference>
<dbReference type="PANTHER" id="PTHR13096">
    <property type="entry name" value="MINA53 MYC INDUCED NUCLEAR ANTIGEN"/>
    <property type="match status" value="1"/>
</dbReference>
<dbReference type="PANTHER" id="PTHR13096:SF8">
    <property type="entry name" value="RIBOSOMAL OXYGENASE 1"/>
    <property type="match status" value="1"/>
</dbReference>
<dbReference type="Pfam" id="PF08007">
    <property type="entry name" value="JmjC_2"/>
    <property type="match status" value="1"/>
</dbReference>
<dbReference type="Pfam" id="PF21233">
    <property type="entry name" value="RIOX1_C_WH"/>
    <property type="match status" value="1"/>
</dbReference>
<dbReference type="SUPFAM" id="SSF51197">
    <property type="entry name" value="Clavaminate synthase-like"/>
    <property type="match status" value="1"/>
</dbReference>
<dbReference type="PROSITE" id="PS51184">
    <property type="entry name" value="JMJC"/>
    <property type="match status" value="1"/>
</dbReference>
<gene>
    <name type="ORF">GE16340</name>
</gene>
<proteinExistence type="inferred from homology"/>
<name>NO66_DROYA</name>
<accession>B4Q068</accession>
<sequence>MHKASTSSANRANFQGNHKTQKSPNNGKAKAKKSPNTDINVADVEMLLNPRSNLTKEQKERRKMMEGFVTKTFERAENESDGSDIDTSASTSNKGKSKAARPTDRKRRLQAEDSPPADANNNNTKNGKDGKVSKESASTQGASATKRKPPRSQGLEHTSPIQVDGEALACPLVRKSLPAAGASGASGPAKSCPLPEKRKSLPAGAAKSKSQVIKQEALEEASNEAQLLALPIETHKTDSIEEGRRVLQWLLNPIKVNHFFDDFWEHTAFVVQRKNPHYYSKLISFKMIDEMLVRHRLDFTINVDVTTYKNGKRETLNPEGRALPPVVWGLYSEGCSIRILNPSTYLVGLRQVCSIMQEFFHCLVGANVYLTPPNSQGFAPHYDDIEAFVIQVEGRKRWRLYEPPSGSDQLCRNSSSNFDQEQLGEPILDEVLEAGDLLYFPRGTVHQAITEEEQHSLHITLSVYQQQAYVNLLEKLMPIVLKKAIKQSVALRRGLPLHTFHVLGEAQRANRSDSRNQLVENVQKLVTKHLMPSAQDIDEAVDQLAKKFQHEALPPIILPEEQVRTVFGSRSTADEQGNAICDYEFDTKTSVRLLRANILRLVTEEDGSVRIYHHVDNGFEYCKYEPIFMEILPEEAAAVELLISAYPYYLTVGQMPLDSAARKVEVVTALWERGLLMTEKPFK</sequence>
<organism>
    <name type="scientific">Drosophila yakuba</name>
    <name type="common">Fruit fly</name>
    <dbReference type="NCBI Taxonomy" id="7245"/>
    <lineage>
        <taxon>Eukaryota</taxon>
        <taxon>Metazoa</taxon>
        <taxon>Ecdysozoa</taxon>
        <taxon>Arthropoda</taxon>
        <taxon>Hexapoda</taxon>
        <taxon>Insecta</taxon>
        <taxon>Pterygota</taxon>
        <taxon>Neoptera</taxon>
        <taxon>Endopterygota</taxon>
        <taxon>Diptera</taxon>
        <taxon>Brachycera</taxon>
        <taxon>Muscomorpha</taxon>
        <taxon>Ephydroidea</taxon>
        <taxon>Drosophilidae</taxon>
        <taxon>Drosophila</taxon>
        <taxon>Sophophora</taxon>
    </lineage>
</organism>